<feature type="chain" id="PRO_1000116122" description="Aspartate carbamoyltransferase catalytic subunit">
    <location>
        <begin position="1"/>
        <end position="304"/>
    </location>
</feature>
<feature type="binding site" evidence="1">
    <location>
        <position position="49"/>
    </location>
    <ligand>
        <name>carbamoyl phosphate</name>
        <dbReference type="ChEBI" id="CHEBI:58228"/>
    </ligand>
</feature>
<feature type="binding site" evidence="1">
    <location>
        <position position="50"/>
    </location>
    <ligand>
        <name>carbamoyl phosphate</name>
        <dbReference type="ChEBI" id="CHEBI:58228"/>
    </ligand>
</feature>
<feature type="binding site" evidence="1">
    <location>
        <position position="77"/>
    </location>
    <ligand>
        <name>L-aspartate</name>
        <dbReference type="ChEBI" id="CHEBI:29991"/>
    </ligand>
</feature>
<feature type="binding site" evidence="1">
    <location>
        <position position="99"/>
    </location>
    <ligand>
        <name>carbamoyl phosphate</name>
        <dbReference type="ChEBI" id="CHEBI:58228"/>
    </ligand>
</feature>
<feature type="binding site" evidence="1">
    <location>
        <position position="127"/>
    </location>
    <ligand>
        <name>carbamoyl phosphate</name>
        <dbReference type="ChEBI" id="CHEBI:58228"/>
    </ligand>
</feature>
<feature type="binding site" evidence="1">
    <location>
        <position position="130"/>
    </location>
    <ligand>
        <name>carbamoyl phosphate</name>
        <dbReference type="ChEBI" id="CHEBI:58228"/>
    </ligand>
</feature>
<feature type="binding site" evidence="1">
    <location>
        <position position="160"/>
    </location>
    <ligand>
        <name>L-aspartate</name>
        <dbReference type="ChEBI" id="CHEBI:29991"/>
    </ligand>
</feature>
<feature type="binding site" evidence="1">
    <location>
        <position position="211"/>
    </location>
    <ligand>
        <name>L-aspartate</name>
        <dbReference type="ChEBI" id="CHEBI:29991"/>
    </ligand>
</feature>
<feature type="binding site" evidence="1">
    <location>
        <position position="252"/>
    </location>
    <ligand>
        <name>carbamoyl phosphate</name>
        <dbReference type="ChEBI" id="CHEBI:58228"/>
    </ligand>
</feature>
<feature type="binding site" evidence="1">
    <location>
        <position position="253"/>
    </location>
    <ligand>
        <name>carbamoyl phosphate</name>
        <dbReference type="ChEBI" id="CHEBI:58228"/>
    </ligand>
</feature>
<organism>
    <name type="scientific">Bacillus anthracis (strain A0248)</name>
    <dbReference type="NCBI Taxonomy" id="592021"/>
    <lineage>
        <taxon>Bacteria</taxon>
        <taxon>Bacillati</taxon>
        <taxon>Bacillota</taxon>
        <taxon>Bacilli</taxon>
        <taxon>Bacillales</taxon>
        <taxon>Bacillaceae</taxon>
        <taxon>Bacillus</taxon>
        <taxon>Bacillus cereus group</taxon>
    </lineage>
</organism>
<comment type="function">
    <text evidence="1">Catalyzes the condensation of carbamoyl phosphate and aspartate to form carbamoyl aspartate and inorganic phosphate, the committed step in the de novo pyrimidine nucleotide biosynthesis pathway.</text>
</comment>
<comment type="catalytic activity">
    <reaction evidence="1">
        <text>carbamoyl phosphate + L-aspartate = N-carbamoyl-L-aspartate + phosphate + H(+)</text>
        <dbReference type="Rhea" id="RHEA:20013"/>
        <dbReference type="ChEBI" id="CHEBI:15378"/>
        <dbReference type="ChEBI" id="CHEBI:29991"/>
        <dbReference type="ChEBI" id="CHEBI:32814"/>
        <dbReference type="ChEBI" id="CHEBI:43474"/>
        <dbReference type="ChEBI" id="CHEBI:58228"/>
        <dbReference type="EC" id="2.1.3.2"/>
    </reaction>
</comment>
<comment type="pathway">
    <text evidence="1">Pyrimidine metabolism; UMP biosynthesis via de novo pathway; (S)-dihydroorotate from bicarbonate: step 2/3.</text>
</comment>
<comment type="subunit">
    <text evidence="1">Heterododecamer (2C3:3R2) of six catalytic PyrB chains organized as two trimers (C3), and six regulatory PyrI chains organized as three dimers (R2).</text>
</comment>
<comment type="similarity">
    <text evidence="1">Belongs to the aspartate/ornithine carbamoyltransferase superfamily. ATCase family.</text>
</comment>
<protein>
    <recommendedName>
        <fullName evidence="1">Aspartate carbamoyltransferase catalytic subunit</fullName>
        <ecNumber evidence="1">2.1.3.2</ecNumber>
    </recommendedName>
    <alternativeName>
        <fullName evidence="1">Aspartate transcarbamylase</fullName>
        <shortName evidence="1">ATCase</shortName>
    </alternativeName>
</protein>
<accession>C3P659</accession>
<name>PYRB_BACAA</name>
<reference key="1">
    <citation type="submission" date="2009-04" db="EMBL/GenBank/DDBJ databases">
        <title>Genome sequence of Bacillus anthracis A0248.</title>
        <authorList>
            <person name="Dodson R.J."/>
            <person name="Munk A.C."/>
            <person name="Bruce D."/>
            <person name="Detter C."/>
            <person name="Tapia R."/>
            <person name="Sutton G."/>
            <person name="Sims D."/>
            <person name="Brettin T."/>
        </authorList>
    </citation>
    <scope>NUCLEOTIDE SEQUENCE [LARGE SCALE GENOMIC DNA]</scope>
    <source>
        <strain>A0248</strain>
    </source>
</reference>
<sequence length="304" mass="34722">MSHLLTMSELSEVEISEILKDAEDFANGKESKTTEQTFVANLFFENSTRTRFSFEVAEKRLGLDVLNFSADASSVQKGETLYDTIRTLESIGTKAVVIRHEQDRYFDELKDQVNIPILNAGDGCGNHPTQCLLDLLTIKQEFGRFEGLKIAIVGDVRHSRVARSNAEALTKLGATIYFASPEEWKDEDNTFGTYKPLDELVPEVDVMMLLRVQHERHDHYETDIMKEYHEKHGLTVEREKRMKEGSIIMHPAPVNRDVEIASELVECERSRIFKQMENGVYVRMAVLKRALPNVLGGMKHELFV</sequence>
<keyword id="KW-0665">Pyrimidine biosynthesis</keyword>
<keyword id="KW-0808">Transferase</keyword>
<proteinExistence type="inferred from homology"/>
<gene>
    <name evidence="1" type="primary">pyrB</name>
    <name type="ordered locus">BAA_4051</name>
</gene>
<dbReference type="EC" id="2.1.3.2" evidence="1"/>
<dbReference type="EMBL" id="CP001598">
    <property type="protein sequence ID" value="ACQ49566.1"/>
    <property type="molecule type" value="Genomic_DNA"/>
</dbReference>
<dbReference type="RefSeq" id="WP_000018849.1">
    <property type="nucleotide sequence ID" value="NC_012659.1"/>
</dbReference>
<dbReference type="SMR" id="C3P659"/>
<dbReference type="GeneID" id="75087026"/>
<dbReference type="KEGG" id="bai:BAA_4051"/>
<dbReference type="HOGENOM" id="CLU_043846_2_1_9"/>
<dbReference type="UniPathway" id="UPA00070">
    <property type="reaction ID" value="UER00116"/>
</dbReference>
<dbReference type="GO" id="GO:0005829">
    <property type="term" value="C:cytosol"/>
    <property type="evidence" value="ECO:0007669"/>
    <property type="project" value="TreeGrafter"/>
</dbReference>
<dbReference type="GO" id="GO:0016597">
    <property type="term" value="F:amino acid binding"/>
    <property type="evidence" value="ECO:0007669"/>
    <property type="project" value="InterPro"/>
</dbReference>
<dbReference type="GO" id="GO:0004070">
    <property type="term" value="F:aspartate carbamoyltransferase activity"/>
    <property type="evidence" value="ECO:0007669"/>
    <property type="project" value="UniProtKB-UniRule"/>
</dbReference>
<dbReference type="GO" id="GO:0006207">
    <property type="term" value="P:'de novo' pyrimidine nucleobase biosynthetic process"/>
    <property type="evidence" value="ECO:0007669"/>
    <property type="project" value="InterPro"/>
</dbReference>
<dbReference type="GO" id="GO:0044205">
    <property type="term" value="P:'de novo' UMP biosynthetic process"/>
    <property type="evidence" value="ECO:0007669"/>
    <property type="project" value="UniProtKB-UniRule"/>
</dbReference>
<dbReference type="GO" id="GO:0006520">
    <property type="term" value="P:amino acid metabolic process"/>
    <property type="evidence" value="ECO:0007669"/>
    <property type="project" value="InterPro"/>
</dbReference>
<dbReference type="FunFam" id="3.40.50.1370:FF:000001">
    <property type="entry name" value="Aspartate carbamoyltransferase"/>
    <property type="match status" value="1"/>
</dbReference>
<dbReference type="FunFam" id="3.40.50.1370:FF:000011">
    <property type="entry name" value="Aspartate carbamoyltransferase"/>
    <property type="match status" value="1"/>
</dbReference>
<dbReference type="Gene3D" id="3.40.50.1370">
    <property type="entry name" value="Aspartate/ornithine carbamoyltransferase"/>
    <property type="match status" value="2"/>
</dbReference>
<dbReference type="HAMAP" id="MF_00001">
    <property type="entry name" value="Asp_carb_tr"/>
    <property type="match status" value="1"/>
</dbReference>
<dbReference type="InterPro" id="IPR006132">
    <property type="entry name" value="Asp/Orn_carbamoyltranf_P-bd"/>
</dbReference>
<dbReference type="InterPro" id="IPR006130">
    <property type="entry name" value="Asp/Orn_carbamoylTrfase"/>
</dbReference>
<dbReference type="InterPro" id="IPR036901">
    <property type="entry name" value="Asp/Orn_carbamoylTrfase_sf"/>
</dbReference>
<dbReference type="InterPro" id="IPR002082">
    <property type="entry name" value="Asp_carbamoyltransf"/>
</dbReference>
<dbReference type="InterPro" id="IPR006131">
    <property type="entry name" value="Asp_carbamoyltransf_Asp/Orn-bd"/>
</dbReference>
<dbReference type="NCBIfam" id="TIGR00670">
    <property type="entry name" value="asp_carb_tr"/>
    <property type="match status" value="1"/>
</dbReference>
<dbReference type="NCBIfam" id="NF002032">
    <property type="entry name" value="PRK00856.1"/>
    <property type="match status" value="1"/>
</dbReference>
<dbReference type="PANTHER" id="PTHR45753:SF6">
    <property type="entry name" value="ASPARTATE CARBAMOYLTRANSFERASE"/>
    <property type="match status" value="1"/>
</dbReference>
<dbReference type="PANTHER" id="PTHR45753">
    <property type="entry name" value="ORNITHINE CARBAMOYLTRANSFERASE, MITOCHONDRIAL"/>
    <property type="match status" value="1"/>
</dbReference>
<dbReference type="Pfam" id="PF00185">
    <property type="entry name" value="OTCace"/>
    <property type="match status" value="1"/>
</dbReference>
<dbReference type="Pfam" id="PF02729">
    <property type="entry name" value="OTCace_N"/>
    <property type="match status" value="1"/>
</dbReference>
<dbReference type="PRINTS" id="PR00100">
    <property type="entry name" value="AOTCASE"/>
</dbReference>
<dbReference type="PRINTS" id="PR00101">
    <property type="entry name" value="ATCASE"/>
</dbReference>
<dbReference type="SUPFAM" id="SSF53671">
    <property type="entry name" value="Aspartate/ornithine carbamoyltransferase"/>
    <property type="match status" value="1"/>
</dbReference>
<dbReference type="PROSITE" id="PS00097">
    <property type="entry name" value="CARBAMOYLTRANSFERASE"/>
    <property type="match status" value="1"/>
</dbReference>
<evidence type="ECO:0000255" key="1">
    <source>
        <dbReference type="HAMAP-Rule" id="MF_00001"/>
    </source>
</evidence>